<dbReference type="EC" id="2.7.8.7" evidence="1"/>
<dbReference type="EMBL" id="CP000805">
    <property type="protein sequence ID" value="ACD71245.1"/>
    <property type="molecule type" value="Genomic_DNA"/>
</dbReference>
<dbReference type="RefSeq" id="WP_010882272.1">
    <property type="nucleotide sequence ID" value="NC_021508.1"/>
</dbReference>
<dbReference type="SMR" id="B2S466"/>
<dbReference type="KEGG" id="tpp:TPASS_0828"/>
<dbReference type="PATRIC" id="fig|455434.6.peg.817"/>
<dbReference type="Proteomes" id="UP000001202">
    <property type="component" value="Chromosome"/>
</dbReference>
<dbReference type="GO" id="GO:0005737">
    <property type="term" value="C:cytoplasm"/>
    <property type="evidence" value="ECO:0007669"/>
    <property type="project" value="UniProtKB-SubCell"/>
</dbReference>
<dbReference type="GO" id="GO:0008897">
    <property type="term" value="F:holo-[acyl-carrier-protein] synthase activity"/>
    <property type="evidence" value="ECO:0007669"/>
    <property type="project" value="UniProtKB-UniRule"/>
</dbReference>
<dbReference type="GO" id="GO:0000287">
    <property type="term" value="F:magnesium ion binding"/>
    <property type="evidence" value="ECO:0007669"/>
    <property type="project" value="UniProtKB-UniRule"/>
</dbReference>
<dbReference type="GO" id="GO:0006633">
    <property type="term" value="P:fatty acid biosynthetic process"/>
    <property type="evidence" value="ECO:0007669"/>
    <property type="project" value="UniProtKB-UniRule"/>
</dbReference>
<dbReference type="Gene3D" id="3.90.470.20">
    <property type="entry name" value="4'-phosphopantetheinyl transferase domain"/>
    <property type="match status" value="1"/>
</dbReference>
<dbReference type="HAMAP" id="MF_00101">
    <property type="entry name" value="AcpS"/>
    <property type="match status" value="1"/>
</dbReference>
<dbReference type="InterPro" id="IPR008278">
    <property type="entry name" value="4-PPantetheinyl_Trfase_dom"/>
</dbReference>
<dbReference type="InterPro" id="IPR037143">
    <property type="entry name" value="4-PPantetheinyl_Trfase_dom_sf"/>
</dbReference>
<dbReference type="InterPro" id="IPR002582">
    <property type="entry name" value="ACPS"/>
</dbReference>
<dbReference type="InterPro" id="IPR004568">
    <property type="entry name" value="Ppantetheine-prot_Trfase_dom"/>
</dbReference>
<dbReference type="NCBIfam" id="TIGR00516">
    <property type="entry name" value="acpS"/>
    <property type="match status" value="1"/>
</dbReference>
<dbReference type="NCBIfam" id="TIGR00556">
    <property type="entry name" value="pantethn_trn"/>
    <property type="match status" value="1"/>
</dbReference>
<dbReference type="NCBIfam" id="NF000832">
    <property type="entry name" value="PRK00070.3-2"/>
    <property type="match status" value="1"/>
</dbReference>
<dbReference type="Pfam" id="PF01648">
    <property type="entry name" value="ACPS"/>
    <property type="match status" value="1"/>
</dbReference>
<dbReference type="SUPFAM" id="SSF56214">
    <property type="entry name" value="4'-phosphopantetheinyl transferase"/>
    <property type="match status" value="1"/>
</dbReference>
<keyword id="KW-0963">Cytoplasm</keyword>
<keyword id="KW-0275">Fatty acid biosynthesis</keyword>
<keyword id="KW-0276">Fatty acid metabolism</keyword>
<keyword id="KW-0444">Lipid biosynthesis</keyword>
<keyword id="KW-0443">Lipid metabolism</keyword>
<keyword id="KW-0460">Magnesium</keyword>
<keyword id="KW-0479">Metal-binding</keyword>
<keyword id="KW-0808">Transferase</keyword>
<accession>B2S466</accession>
<organism>
    <name type="scientific">Treponema pallidum subsp. pallidum (strain SS14)</name>
    <dbReference type="NCBI Taxonomy" id="455434"/>
    <lineage>
        <taxon>Bacteria</taxon>
        <taxon>Pseudomonadati</taxon>
        <taxon>Spirochaetota</taxon>
        <taxon>Spirochaetia</taxon>
        <taxon>Spirochaetales</taxon>
        <taxon>Treponemataceae</taxon>
        <taxon>Treponema</taxon>
    </lineage>
</organism>
<feature type="chain" id="PRO_1000093927" description="Holo-[acyl-carrier-protein] synthase">
    <location>
        <begin position="1"/>
        <end position="125"/>
    </location>
</feature>
<feature type="binding site" evidence="1">
    <location>
        <position position="8"/>
    </location>
    <ligand>
        <name>Mg(2+)</name>
        <dbReference type="ChEBI" id="CHEBI:18420"/>
    </ligand>
</feature>
<feature type="binding site" evidence="1">
    <location>
        <position position="55"/>
    </location>
    <ligand>
        <name>Mg(2+)</name>
        <dbReference type="ChEBI" id="CHEBI:18420"/>
    </ligand>
</feature>
<sequence length="125" mass="14118">MIIGVGIDIVEIERFVSWTHNVRLLRRFFHQEEIVDFFKNHMRAQFLATRFAAKEAFGKALGTGLRNMELRNIRVCQNGWGKPRLEVYGAAQAMLAATGGTHIQVSLTHEREVASAIVIIEGEPL</sequence>
<proteinExistence type="inferred from homology"/>
<evidence type="ECO:0000255" key="1">
    <source>
        <dbReference type="HAMAP-Rule" id="MF_00101"/>
    </source>
</evidence>
<name>ACPS_TREPS</name>
<reference key="1">
    <citation type="journal article" date="2008" name="BMC Microbiol.">
        <title>Complete genome sequence of Treponema pallidum ssp. pallidum strain SS14 determined with oligonucleotide arrays.</title>
        <authorList>
            <person name="Matejkova P."/>
            <person name="Strouhal M."/>
            <person name="Smajs D."/>
            <person name="Norris S.J."/>
            <person name="Palzkill T."/>
            <person name="Petrosino J.F."/>
            <person name="Sodergren E."/>
            <person name="Norton J.E."/>
            <person name="Singh J."/>
            <person name="Richmond T.A."/>
            <person name="Molla M.N."/>
            <person name="Albert T.J."/>
            <person name="Weinstock G.M."/>
        </authorList>
    </citation>
    <scope>NUCLEOTIDE SEQUENCE [LARGE SCALE GENOMIC DNA]</scope>
    <source>
        <strain>SS14</strain>
    </source>
</reference>
<protein>
    <recommendedName>
        <fullName evidence="1">Holo-[acyl-carrier-protein] synthase</fullName>
        <shortName evidence="1">Holo-ACP synthase</shortName>
        <ecNumber evidence="1">2.7.8.7</ecNumber>
    </recommendedName>
    <alternativeName>
        <fullName evidence="1">4'-phosphopantetheinyl transferase AcpS</fullName>
    </alternativeName>
</protein>
<gene>
    <name evidence="1" type="primary">acpS</name>
    <name type="ordered locus">TPASS_0828</name>
</gene>
<comment type="function">
    <text evidence="1">Transfers the 4'-phosphopantetheine moiety from coenzyme A to a Ser of acyl-carrier-protein.</text>
</comment>
<comment type="catalytic activity">
    <reaction evidence="1">
        <text>apo-[ACP] + CoA = holo-[ACP] + adenosine 3',5'-bisphosphate + H(+)</text>
        <dbReference type="Rhea" id="RHEA:12068"/>
        <dbReference type="Rhea" id="RHEA-COMP:9685"/>
        <dbReference type="Rhea" id="RHEA-COMP:9690"/>
        <dbReference type="ChEBI" id="CHEBI:15378"/>
        <dbReference type="ChEBI" id="CHEBI:29999"/>
        <dbReference type="ChEBI" id="CHEBI:57287"/>
        <dbReference type="ChEBI" id="CHEBI:58343"/>
        <dbReference type="ChEBI" id="CHEBI:64479"/>
        <dbReference type="EC" id="2.7.8.7"/>
    </reaction>
</comment>
<comment type="cofactor">
    <cofactor evidence="1">
        <name>Mg(2+)</name>
        <dbReference type="ChEBI" id="CHEBI:18420"/>
    </cofactor>
</comment>
<comment type="subcellular location">
    <subcellularLocation>
        <location evidence="1">Cytoplasm</location>
    </subcellularLocation>
</comment>
<comment type="similarity">
    <text evidence="1">Belongs to the P-Pant transferase superfamily. AcpS family.</text>
</comment>